<feature type="chain" id="PRO_0000161035" description="Histidine ammonia-lyase">
    <location>
        <begin position="1"/>
        <end position="510"/>
    </location>
</feature>
<feature type="modified residue" description="2,3-didehydroalanine (Ser)" evidence="1">
    <location>
        <position position="146"/>
    </location>
</feature>
<feature type="cross-link" description="5-imidazolinone (Ala-Gly)" evidence="1">
    <location>
        <begin position="145"/>
        <end position="147"/>
    </location>
</feature>
<keyword id="KW-0963">Cytoplasm</keyword>
<keyword id="KW-0369">Histidine metabolism</keyword>
<keyword id="KW-0456">Lyase</keyword>
<protein>
    <recommendedName>
        <fullName evidence="1">Histidine ammonia-lyase</fullName>
        <shortName evidence="1">Histidase</shortName>
        <ecNumber evidence="1">4.3.1.3</ecNumber>
    </recommendedName>
</protein>
<name>HUTH_STIAU</name>
<reference key="1">
    <citation type="journal article" date="2001" name="Chem. Biol.">
        <title>Novel features in a combined polyketide synthase/non-ribosomal peptide synthetase: the myxalamid biosynthetic gene cluster of the myxobacterium Stigmatella aurantiaca Sga15.</title>
        <authorList>
            <person name="Silakowski B."/>
            <person name="Nordsiek G."/>
            <person name="Kunze B."/>
            <person name="Blocker H."/>
            <person name="Muller R."/>
        </authorList>
    </citation>
    <scope>NUCLEOTIDE SEQUENCE [GENOMIC DNA]</scope>
</reference>
<sequence length="510" mass="54201">MSRPRLNIDGDTLKLEEILQVARHTVTVELAPAAAARVKAARDLVDRVAAGDTPSYGINTGFGTLAEVRIDKKDLRELQRNLILSHAAGVGSPLPLPEARVLLLLRCNVLAKGYSGIRPETLALALEMLNRDVVPVVPERGSVGASGDLAPLAHLALVFIGEGEAFYKGERLPAAQALERAGLKPVVLEAKEGLALVNGTQAMCAVGTLLQLRAEMLADLADLAGAMTLEGLLGSHKPFIPEIQDVRAHEGQKACAAHLRELLADSALVESHVNCSKVQDPYSLRCMPQVHGAAREGLSFARRILEVEINSATDNPLVFVETERIVSGGNFHGQPVSLALDVAAMALTQLSAISERRVEQLVNPALSGLPPFLAKNSGLNSGFMIAQVTSAALVAESRVLSHPASVDSIPSSAGREDHVSMGMTAALKGRQVADFTRSCLAIELLVAAQALDYRQPTRAGKGPQAAYELIRSKIPTMEKDRELHRDIAAVSALIDSGELLNAVRTATRGQ</sequence>
<proteinExistence type="inferred from homology"/>
<accession>Q93TX3</accession>
<gene>
    <name evidence="1" type="primary">hutH</name>
</gene>
<evidence type="ECO:0000255" key="1">
    <source>
        <dbReference type="HAMAP-Rule" id="MF_00229"/>
    </source>
</evidence>
<dbReference type="EC" id="4.3.1.3" evidence="1"/>
<dbReference type="EMBL" id="AF319998">
    <property type="protein sequence ID" value="AAK57183.1"/>
    <property type="molecule type" value="Genomic_DNA"/>
</dbReference>
<dbReference type="SMR" id="Q93TX3"/>
<dbReference type="UniPathway" id="UPA00379">
    <property type="reaction ID" value="UER00549"/>
</dbReference>
<dbReference type="GO" id="GO:0005737">
    <property type="term" value="C:cytoplasm"/>
    <property type="evidence" value="ECO:0007669"/>
    <property type="project" value="UniProtKB-SubCell"/>
</dbReference>
<dbReference type="GO" id="GO:0004397">
    <property type="term" value="F:histidine ammonia-lyase activity"/>
    <property type="evidence" value="ECO:0007669"/>
    <property type="project" value="UniProtKB-UniRule"/>
</dbReference>
<dbReference type="GO" id="GO:0019556">
    <property type="term" value="P:L-histidine catabolic process to glutamate and formamide"/>
    <property type="evidence" value="ECO:0007669"/>
    <property type="project" value="UniProtKB-UniPathway"/>
</dbReference>
<dbReference type="GO" id="GO:0019557">
    <property type="term" value="P:L-histidine catabolic process to glutamate and formate"/>
    <property type="evidence" value="ECO:0007669"/>
    <property type="project" value="UniProtKB-UniPathway"/>
</dbReference>
<dbReference type="CDD" id="cd00332">
    <property type="entry name" value="PAL-HAL"/>
    <property type="match status" value="1"/>
</dbReference>
<dbReference type="FunFam" id="1.10.275.10:FF:000005">
    <property type="entry name" value="Histidine ammonia-lyase"/>
    <property type="match status" value="1"/>
</dbReference>
<dbReference type="FunFam" id="1.20.200.10:FF:000003">
    <property type="entry name" value="Histidine ammonia-lyase"/>
    <property type="match status" value="1"/>
</dbReference>
<dbReference type="Gene3D" id="1.20.200.10">
    <property type="entry name" value="Fumarase/aspartase (Central domain)"/>
    <property type="match status" value="1"/>
</dbReference>
<dbReference type="Gene3D" id="1.10.275.10">
    <property type="entry name" value="Fumarase/aspartase (N-terminal domain)"/>
    <property type="match status" value="1"/>
</dbReference>
<dbReference type="HAMAP" id="MF_00229">
    <property type="entry name" value="His_ammonia_lyase"/>
    <property type="match status" value="1"/>
</dbReference>
<dbReference type="InterPro" id="IPR001106">
    <property type="entry name" value="Aromatic_Lyase"/>
</dbReference>
<dbReference type="InterPro" id="IPR024083">
    <property type="entry name" value="Fumarase/histidase_N"/>
</dbReference>
<dbReference type="InterPro" id="IPR005921">
    <property type="entry name" value="HutH"/>
</dbReference>
<dbReference type="InterPro" id="IPR008948">
    <property type="entry name" value="L-Aspartase-like"/>
</dbReference>
<dbReference type="InterPro" id="IPR022313">
    <property type="entry name" value="Phe/His_NH3-lyase_AS"/>
</dbReference>
<dbReference type="NCBIfam" id="TIGR01225">
    <property type="entry name" value="hutH"/>
    <property type="match status" value="1"/>
</dbReference>
<dbReference type="NCBIfam" id="NF006871">
    <property type="entry name" value="PRK09367.1"/>
    <property type="match status" value="1"/>
</dbReference>
<dbReference type="PANTHER" id="PTHR10362">
    <property type="entry name" value="HISTIDINE AMMONIA-LYASE"/>
    <property type="match status" value="1"/>
</dbReference>
<dbReference type="Pfam" id="PF00221">
    <property type="entry name" value="Lyase_aromatic"/>
    <property type="match status" value="1"/>
</dbReference>
<dbReference type="SUPFAM" id="SSF48557">
    <property type="entry name" value="L-aspartase-like"/>
    <property type="match status" value="1"/>
</dbReference>
<dbReference type="PROSITE" id="PS00488">
    <property type="entry name" value="PAL_HISTIDASE"/>
    <property type="match status" value="1"/>
</dbReference>
<organism>
    <name type="scientific">Stigmatella aurantiaca</name>
    <dbReference type="NCBI Taxonomy" id="41"/>
    <lineage>
        <taxon>Bacteria</taxon>
        <taxon>Pseudomonadati</taxon>
        <taxon>Myxococcota</taxon>
        <taxon>Myxococcia</taxon>
        <taxon>Myxococcales</taxon>
        <taxon>Cystobacterineae</taxon>
        <taxon>Archangiaceae</taxon>
        <taxon>Stigmatella</taxon>
    </lineage>
</organism>
<comment type="catalytic activity">
    <reaction evidence="1">
        <text>L-histidine = trans-urocanate + NH4(+)</text>
        <dbReference type="Rhea" id="RHEA:21232"/>
        <dbReference type="ChEBI" id="CHEBI:17771"/>
        <dbReference type="ChEBI" id="CHEBI:28938"/>
        <dbReference type="ChEBI" id="CHEBI:57595"/>
        <dbReference type="EC" id="4.3.1.3"/>
    </reaction>
</comment>
<comment type="pathway">
    <text evidence="1">Amino-acid degradation; L-histidine degradation into L-glutamate; N-formimidoyl-L-glutamate from L-histidine: step 1/3.</text>
</comment>
<comment type="subcellular location">
    <subcellularLocation>
        <location evidence="1">Cytoplasm</location>
    </subcellularLocation>
</comment>
<comment type="PTM">
    <text evidence="1">Contains an active site 4-methylidene-imidazol-5-one (MIO), which is formed autocatalytically by cyclization and dehydration of residues Ala-Ser-Gly.</text>
</comment>
<comment type="similarity">
    <text evidence="1">Belongs to the PAL/histidase family.</text>
</comment>